<protein>
    <recommendedName>
        <fullName evidence="1">Ribosomal RNA small subunit methyltransferase J</fullName>
        <ecNumber evidence="1">2.1.1.242</ecNumber>
    </recommendedName>
    <alternativeName>
        <fullName evidence="1">16S rRNA m2G1516 methyltransferase</fullName>
    </alternativeName>
    <alternativeName>
        <fullName evidence="1">rRNA (guanine-N(2)-)-methyltransferase</fullName>
    </alternativeName>
</protein>
<feature type="chain" id="PRO_1000198504" description="Ribosomal RNA small subunit methyltransferase J">
    <location>
        <begin position="1"/>
        <end position="261"/>
    </location>
</feature>
<feature type="binding site" evidence="1">
    <location>
        <begin position="109"/>
        <end position="110"/>
    </location>
    <ligand>
        <name>S-adenosyl-L-methionine</name>
        <dbReference type="ChEBI" id="CHEBI:59789"/>
    </ligand>
</feature>
<feature type="binding site" evidence="1">
    <location>
        <begin position="125"/>
        <end position="126"/>
    </location>
    <ligand>
        <name>S-adenosyl-L-methionine</name>
        <dbReference type="ChEBI" id="CHEBI:59789"/>
    </ligand>
</feature>
<feature type="binding site" evidence="1">
    <location>
        <position position="179"/>
    </location>
    <ligand>
        <name>S-adenosyl-L-methionine</name>
        <dbReference type="ChEBI" id="CHEBI:59789"/>
    </ligand>
</feature>
<gene>
    <name evidence="1" type="primary">rsmJ</name>
    <name type="ordered locus">PLES_13041</name>
</gene>
<dbReference type="EC" id="2.1.1.242" evidence="1"/>
<dbReference type="EMBL" id="FM209186">
    <property type="protein sequence ID" value="CAW26031.1"/>
    <property type="molecule type" value="Genomic_DNA"/>
</dbReference>
<dbReference type="RefSeq" id="WP_003453660.1">
    <property type="nucleotide sequence ID" value="NC_011770.1"/>
</dbReference>
<dbReference type="SMR" id="B7V2T3"/>
<dbReference type="KEGG" id="pag:PLES_13041"/>
<dbReference type="HOGENOM" id="CLU_076324_0_1_6"/>
<dbReference type="GO" id="GO:0005737">
    <property type="term" value="C:cytoplasm"/>
    <property type="evidence" value="ECO:0007669"/>
    <property type="project" value="UniProtKB-SubCell"/>
</dbReference>
<dbReference type="GO" id="GO:0008990">
    <property type="term" value="F:rRNA (guanine-N2-)-methyltransferase activity"/>
    <property type="evidence" value="ECO:0007669"/>
    <property type="project" value="UniProtKB-UniRule"/>
</dbReference>
<dbReference type="CDD" id="cd02440">
    <property type="entry name" value="AdoMet_MTases"/>
    <property type="match status" value="1"/>
</dbReference>
<dbReference type="Gene3D" id="3.40.50.150">
    <property type="entry name" value="Vaccinia Virus protein VP39"/>
    <property type="match status" value="1"/>
</dbReference>
<dbReference type="HAMAP" id="MF_01523">
    <property type="entry name" value="16SrRNA_methyltr_J"/>
    <property type="match status" value="1"/>
</dbReference>
<dbReference type="InterPro" id="IPR007536">
    <property type="entry name" value="16SrRNA_methylTrfase_J"/>
</dbReference>
<dbReference type="InterPro" id="IPR029063">
    <property type="entry name" value="SAM-dependent_MTases_sf"/>
</dbReference>
<dbReference type="PANTHER" id="PTHR36112">
    <property type="entry name" value="RIBOSOMAL RNA SMALL SUBUNIT METHYLTRANSFERASE J"/>
    <property type="match status" value="1"/>
</dbReference>
<dbReference type="PANTHER" id="PTHR36112:SF1">
    <property type="entry name" value="RIBOSOMAL RNA SMALL SUBUNIT METHYLTRANSFERASE J"/>
    <property type="match status" value="1"/>
</dbReference>
<dbReference type="Pfam" id="PF04445">
    <property type="entry name" value="SAM_MT"/>
    <property type="match status" value="1"/>
</dbReference>
<dbReference type="SUPFAM" id="SSF53335">
    <property type="entry name" value="S-adenosyl-L-methionine-dependent methyltransferases"/>
    <property type="match status" value="1"/>
</dbReference>
<evidence type="ECO:0000255" key="1">
    <source>
        <dbReference type="HAMAP-Rule" id="MF_01523"/>
    </source>
</evidence>
<sequence length="261" mass="27846">MTDSAAPRLHVQALSAGCAEAARRWAERLGLPLAADDEAEFAVQVGEQGLQVLQLGADSPGPVRVDFVEGASAHRRKFGGGSGQMIAKAVGVQPGIRPRVLDATAGLGRDGFVLASLGCEVTLVERQPLIAALLEDGLERARRDPDVAPIAARMRLLGGNSADLMRAWDGEAPQVVYLDPMFPHRDKSALVKKEMRLFRPLVGDDLDAPALLQAALALASHRVVVKRPRKAPIIEGPKPGYSLEGKSSRYDIYPKKALGKG</sequence>
<name>RSMJ_PSEA8</name>
<comment type="function">
    <text evidence="1">Specifically methylates the guanosine in position 1516 of 16S rRNA.</text>
</comment>
<comment type="catalytic activity">
    <reaction evidence="1">
        <text>guanosine(1516) in 16S rRNA + S-adenosyl-L-methionine = N(2)-methylguanosine(1516) in 16S rRNA + S-adenosyl-L-homocysteine + H(+)</text>
        <dbReference type="Rhea" id="RHEA:43220"/>
        <dbReference type="Rhea" id="RHEA-COMP:10412"/>
        <dbReference type="Rhea" id="RHEA-COMP:10413"/>
        <dbReference type="ChEBI" id="CHEBI:15378"/>
        <dbReference type="ChEBI" id="CHEBI:57856"/>
        <dbReference type="ChEBI" id="CHEBI:59789"/>
        <dbReference type="ChEBI" id="CHEBI:74269"/>
        <dbReference type="ChEBI" id="CHEBI:74481"/>
        <dbReference type="EC" id="2.1.1.242"/>
    </reaction>
</comment>
<comment type="subcellular location">
    <subcellularLocation>
        <location evidence="1">Cytoplasm</location>
    </subcellularLocation>
</comment>
<comment type="similarity">
    <text evidence="1">Belongs to the methyltransferase superfamily. RsmJ family.</text>
</comment>
<keyword id="KW-0963">Cytoplasm</keyword>
<keyword id="KW-0489">Methyltransferase</keyword>
<keyword id="KW-0698">rRNA processing</keyword>
<keyword id="KW-0949">S-adenosyl-L-methionine</keyword>
<keyword id="KW-0808">Transferase</keyword>
<reference key="1">
    <citation type="journal article" date="2009" name="Genome Res.">
        <title>Newly introduced genomic prophage islands are critical determinants of in vivo competitiveness in the Liverpool epidemic strain of Pseudomonas aeruginosa.</title>
        <authorList>
            <person name="Winstanley C."/>
            <person name="Langille M.G.I."/>
            <person name="Fothergill J.L."/>
            <person name="Kukavica-Ibrulj I."/>
            <person name="Paradis-Bleau C."/>
            <person name="Sanschagrin F."/>
            <person name="Thomson N.R."/>
            <person name="Winsor G.L."/>
            <person name="Quail M.A."/>
            <person name="Lennard N."/>
            <person name="Bignell A."/>
            <person name="Clarke L."/>
            <person name="Seeger K."/>
            <person name="Saunders D."/>
            <person name="Harris D."/>
            <person name="Parkhill J."/>
            <person name="Hancock R.E.W."/>
            <person name="Brinkman F.S.L."/>
            <person name="Levesque R.C."/>
        </authorList>
    </citation>
    <scope>NUCLEOTIDE SEQUENCE [LARGE SCALE GENOMIC DNA]</scope>
    <source>
        <strain>LESB58</strain>
    </source>
</reference>
<accession>B7V2T3</accession>
<organism>
    <name type="scientific">Pseudomonas aeruginosa (strain LESB58)</name>
    <dbReference type="NCBI Taxonomy" id="557722"/>
    <lineage>
        <taxon>Bacteria</taxon>
        <taxon>Pseudomonadati</taxon>
        <taxon>Pseudomonadota</taxon>
        <taxon>Gammaproteobacteria</taxon>
        <taxon>Pseudomonadales</taxon>
        <taxon>Pseudomonadaceae</taxon>
        <taxon>Pseudomonas</taxon>
    </lineage>
</organism>
<proteinExistence type="inferred from homology"/>